<evidence type="ECO:0000255" key="1">
    <source>
        <dbReference type="HAMAP-Rule" id="MF_00253"/>
    </source>
</evidence>
<keyword id="KW-0030">Aminoacyl-tRNA synthetase</keyword>
<keyword id="KW-0067">ATP-binding</keyword>
<keyword id="KW-0963">Cytoplasm</keyword>
<keyword id="KW-0436">Ligase</keyword>
<keyword id="KW-0547">Nucleotide-binding</keyword>
<keyword id="KW-0648">Protein biosynthesis</keyword>
<keyword id="KW-1185">Reference proteome</keyword>
<sequence>MRYKFKTQEDLVNHLKSVGFVFANSEIYNGLANAWDYGPLGVLLKNNLKNLWWKEFVTKQKNIVGLDSAIILNPLVWKASGHLDNFSDPLIDCKSCKTRYRADKLIESFNKDIHIAENSTNEEFMKVLNDHKIFCPTCKQFNWTDIRHFNLMFKTHQGVIEDPKNIVYLRPETAQGIFVNFKNVQRSMRLHLPFGIAQIGKSFRNEITPGNFIFRTREFEQMEIEFFLKEEIAYDVFDKYLNQIQNWLVTCCGLDLNNLRKHEHPKEELSHYSKKTIDFEYNFLHGFSELYGIAYRTNYDLSVHMNLSKKDLTYFDEETKQKYIPHVIEPSVGVERLLYAILTEATFIEKLANDEDRILMNLKYDLAPYKIAVMPLVNKLKEKAEAVYNKILDLNISVTFDNSGSIGKRYRRQDAIGTIYCITIDYDSFGDEHDPTFTIRERNTMAQKRIKLSELSLYLSQKAHEDFQKQCQK</sequence>
<protein>
    <recommendedName>
        <fullName evidence="1">Glycine--tRNA ligase</fullName>
        <ecNumber evidence="1">6.1.1.14</ecNumber>
    </recommendedName>
    <alternativeName>
        <fullName evidence="1">Glycyl-tRNA synthetase</fullName>
        <shortName evidence="1">GlyRS</shortName>
    </alternativeName>
</protein>
<gene>
    <name evidence="1" type="primary">glyQS</name>
    <name type="synonym">glyS</name>
    <name type="ordered locus">UU493</name>
</gene>
<name>SYG_UREPA</name>
<proteinExistence type="inferred from homology"/>
<comment type="function">
    <text evidence="1">Catalyzes the attachment of glycine to tRNA(Gly).</text>
</comment>
<comment type="catalytic activity">
    <reaction evidence="1">
        <text>tRNA(Gly) + glycine + ATP = glycyl-tRNA(Gly) + AMP + diphosphate</text>
        <dbReference type="Rhea" id="RHEA:16013"/>
        <dbReference type="Rhea" id="RHEA-COMP:9664"/>
        <dbReference type="Rhea" id="RHEA-COMP:9683"/>
        <dbReference type="ChEBI" id="CHEBI:30616"/>
        <dbReference type="ChEBI" id="CHEBI:33019"/>
        <dbReference type="ChEBI" id="CHEBI:57305"/>
        <dbReference type="ChEBI" id="CHEBI:78442"/>
        <dbReference type="ChEBI" id="CHEBI:78522"/>
        <dbReference type="ChEBI" id="CHEBI:456215"/>
        <dbReference type="EC" id="6.1.1.14"/>
    </reaction>
</comment>
<comment type="subunit">
    <text evidence="1">Homodimer.</text>
</comment>
<comment type="subcellular location">
    <subcellularLocation>
        <location evidence="1">Cytoplasm</location>
    </subcellularLocation>
</comment>
<comment type="similarity">
    <text evidence="1">Belongs to the class-II aminoacyl-tRNA synthetase family.</text>
</comment>
<organism>
    <name type="scientific">Ureaplasma parvum serovar 3 (strain ATCC 700970)</name>
    <dbReference type="NCBI Taxonomy" id="273119"/>
    <lineage>
        <taxon>Bacteria</taxon>
        <taxon>Bacillati</taxon>
        <taxon>Mycoplasmatota</taxon>
        <taxon>Mycoplasmoidales</taxon>
        <taxon>Mycoplasmoidaceae</taxon>
        <taxon>Ureaplasma</taxon>
    </lineage>
</organism>
<reference key="1">
    <citation type="journal article" date="2000" name="Nature">
        <title>The complete sequence of the mucosal pathogen Ureaplasma urealyticum.</title>
        <authorList>
            <person name="Glass J.I."/>
            <person name="Lefkowitz E.J."/>
            <person name="Glass J.S."/>
            <person name="Heiner C.R."/>
            <person name="Chen E.Y."/>
            <person name="Cassell G.H."/>
        </authorList>
    </citation>
    <scope>NUCLEOTIDE SEQUENCE [LARGE SCALE GENOMIC DNA]</scope>
    <source>
        <strain>ATCC 700970</strain>
    </source>
</reference>
<dbReference type="EC" id="6.1.1.14" evidence="1"/>
<dbReference type="EMBL" id="AF222894">
    <property type="protein sequence ID" value="AAF30905.1"/>
    <property type="molecule type" value="Genomic_DNA"/>
</dbReference>
<dbReference type="RefSeq" id="WP_010891800.1">
    <property type="nucleotide sequence ID" value="NC_002162.1"/>
</dbReference>
<dbReference type="SMR" id="Q9PPZ7"/>
<dbReference type="STRING" id="273119.UU493"/>
<dbReference type="EnsemblBacteria" id="AAF30905">
    <property type="protein sequence ID" value="AAF30905"/>
    <property type="gene ID" value="UU493"/>
</dbReference>
<dbReference type="GeneID" id="29672356"/>
<dbReference type="KEGG" id="uur:UU493"/>
<dbReference type="PATRIC" id="fig|273119.6.peg.510"/>
<dbReference type="eggNOG" id="COG0423">
    <property type="taxonomic scope" value="Bacteria"/>
</dbReference>
<dbReference type="HOGENOM" id="CLU_015515_2_0_14"/>
<dbReference type="OrthoDB" id="9760853at2"/>
<dbReference type="Proteomes" id="UP000000423">
    <property type="component" value="Chromosome"/>
</dbReference>
<dbReference type="GO" id="GO:0005737">
    <property type="term" value="C:cytoplasm"/>
    <property type="evidence" value="ECO:0007669"/>
    <property type="project" value="UniProtKB-SubCell"/>
</dbReference>
<dbReference type="GO" id="GO:0005524">
    <property type="term" value="F:ATP binding"/>
    <property type="evidence" value="ECO:0007669"/>
    <property type="project" value="UniProtKB-UniRule"/>
</dbReference>
<dbReference type="GO" id="GO:0004820">
    <property type="term" value="F:glycine-tRNA ligase activity"/>
    <property type="evidence" value="ECO:0000250"/>
    <property type="project" value="UniProtKB"/>
</dbReference>
<dbReference type="GO" id="GO:0046983">
    <property type="term" value="F:protein dimerization activity"/>
    <property type="evidence" value="ECO:0000250"/>
    <property type="project" value="UniProtKB"/>
</dbReference>
<dbReference type="GO" id="GO:0006426">
    <property type="term" value="P:glycyl-tRNA aminoacylation"/>
    <property type="evidence" value="ECO:0007669"/>
    <property type="project" value="UniProtKB-UniRule"/>
</dbReference>
<dbReference type="CDD" id="cd00774">
    <property type="entry name" value="GlyRS-like_core"/>
    <property type="match status" value="1"/>
</dbReference>
<dbReference type="CDD" id="cd00858">
    <property type="entry name" value="GlyRS_anticodon"/>
    <property type="match status" value="1"/>
</dbReference>
<dbReference type="FunFam" id="3.40.50.800:FF:000029">
    <property type="entry name" value="Glycine--tRNA ligase"/>
    <property type="match status" value="1"/>
</dbReference>
<dbReference type="Gene3D" id="3.40.50.800">
    <property type="entry name" value="Anticodon-binding domain"/>
    <property type="match status" value="1"/>
</dbReference>
<dbReference type="Gene3D" id="3.30.930.10">
    <property type="entry name" value="Bira Bifunctional Protein, Domain 2"/>
    <property type="match status" value="1"/>
</dbReference>
<dbReference type="HAMAP" id="MF_00253_B">
    <property type="entry name" value="Gly_tRNA_synth_B"/>
    <property type="match status" value="1"/>
</dbReference>
<dbReference type="InterPro" id="IPR002314">
    <property type="entry name" value="aa-tRNA-synt_IIb"/>
</dbReference>
<dbReference type="InterPro" id="IPR006195">
    <property type="entry name" value="aa-tRNA-synth_II"/>
</dbReference>
<dbReference type="InterPro" id="IPR045864">
    <property type="entry name" value="aa-tRNA-synth_II/BPL/LPL"/>
</dbReference>
<dbReference type="InterPro" id="IPR004154">
    <property type="entry name" value="Anticodon-bd"/>
</dbReference>
<dbReference type="InterPro" id="IPR036621">
    <property type="entry name" value="Anticodon-bd_dom_sf"/>
</dbReference>
<dbReference type="InterPro" id="IPR027031">
    <property type="entry name" value="Gly-tRNA_synthase/POLG2"/>
</dbReference>
<dbReference type="InterPro" id="IPR022961">
    <property type="entry name" value="Gly_tRNA_ligase_bac"/>
</dbReference>
<dbReference type="InterPro" id="IPR033731">
    <property type="entry name" value="GlyRS-like_core"/>
</dbReference>
<dbReference type="InterPro" id="IPR002315">
    <property type="entry name" value="tRNA-synt_gly"/>
</dbReference>
<dbReference type="NCBIfam" id="TIGR00389">
    <property type="entry name" value="glyS_dimeric"/>
    <property type="match status" value="1"/>
</dbReference>
<dbReference type="NCBIfam" id="NF003211">
    <property type="entry name" value="PRK04173.1"/>
    <property type="match status" value="1"/>
</dbReference>
<dbReference type="PANTHER" id="PTHR10745:SF8">
    <property type="entry name" value="DNA POLYMERASE SUBUNIT GAMMA-2, MITOCHONDRIAL"/>
    <property type="match status" value="1"/>
</dbReference>
<dbReference type="PANTHER" id="PTHR10745">
    <property type="entry name" value="GLYCYL-TRNA SYNTHETASE/DNA POLYMERASE SUBUNIT GAMMA-2"/>
    <property type="match status" value="1"/>
</dbReference>
<dbReference type="Pfam" id="PF03129">
    <property type="entry name" value="HGTP_anticodon"/>
    <property type="match status" value="1"/>
</dbReference>
<dbReference type="Pfam" id="PF00587">
    <property type="entry name" value="tRNA-synt_2b"/>
    <property type="match status" value="1"/>
</dbReference>
<dbReference type="PRINTS" id="PR01043">
    <property type="entry name" value="TRNASYNTHGLY"/>
</dbReference>
<dbReference type="SUPFAM" id="SSF52954">
    <property type="entry name" value="Class II aaRS ABD-related"/>
    <property type="match status" value="1"/>
</dbReference>
<dbReference type="SUPFAM" id="SSF55681">
    <property type="entry name" value="Class II aaRS and biotin synthetases"/>
    <property type="match status" value="1"/>
</dbReference>
<dbReference type="PROSITE" id="PS50862">
    <property type="entry name" value="AA_TRNA_LIGASE_II"/>
    <property type="match status" value="1"/>
</dbReference>
<feature type="chain" id="PRO_0000072987" description="Glycine--tRNA ligase">
    <location>
        <begin position="1"/>
        <end position="473"/>
    </location>
</feature>
<feature type="binding site" evidence="1">
    <location>
        <position position="101"/>
    </location>
    <ligand>
        <name>substrate</name>
    </ligand>
</feature>
<feature type="binding site" evidence="1">
    <location>
        <position position="172"/>
    </location>
    <ligand>
        <name>substrate</name>
    </ligand>
</feature>
<feature type="binding site" evidence="1">
    <location>
        <begin position="204"/>
        <end position="206"/>
    </location>
    <ligand>
        <name>ATP</name>
        <dbReference type="ChEBI" id="CHEBI:30616"/>
    </ligand>
</feature>
<feature type="binding site" evidence="1">
    <location>
        <begin position="214"/>
        <end position="219"/>
    </location>
    <ligand>
        <name>ATP</name>
        <dbReference type="ChEBI" id="CHEBI:30616"/>
    </ligand>
</feature>
<feature type="binding site" evidence="1">
    <location>
        <begin position="219"/>
        <end position="223"/>
    </location>
    <ligand>
        <name>substrate</name>
    </ligand>
</feature>
<feature type="binding site" evidence="1">
    <location>
        <begin position="289"/>
        <end position="290"/>
    </location>
    <ligand>
        <name>ATP</name>
        <dbReference type="ChEBI" id="CHEBI:30616"/>
    </ligand>
</feature>
<feature type="binding site" evidence="1">
    <location>
        <begin position="329"/>
        <end position="333"/>
    </location>
    <ligand>
        <name>substrate</name>
    </ligand>
</feature>
<feature type="binding site" evidence="1">
    <location>
        <begin position="333"/>
        <end position="336"/>
    </location>
    <ligand>
        <name>ATP</name>
        <dbReference type="ChEBI" id="CHEBI:30616"/>
    </ligand>
</feature>
<accession>Q9PPZ7</accession>